<reference key="1">
    <citation type="journal article" date="2001" name="Science">
        <title>Comparative genomics of Listeria species.</title>
        <authorList>
            <person name="Glaser P."/>
            <person name="Frangeul L."/>
            <person name="Buchrieser C."/>
            <person name="Rusniok C."/>
            <person name="Amend A."/>
            <person name="Baquero F."/>
            <person name="Berche P."/>
            <person name="Bloecker H."/>
            <person name="Brandt P."/>
            <person name="Chakraborty T."/>
            <person name="Charbit A."/>
            <person name="Chetouani F."/>
            <person name="Couve E."/>
            <person name="de Daruvar A."/>
            <person name="Dehoux P."/>
            <person name="Domann E."/>
            <person name="Dominguez-Bernal G."/>
            <person name="Duchaud E."/>
            <person name="Durant L."/>
            <person name="Dussurget O."/>
            <person name="Entian K.-D."/>
            <person name="Fsihi H."/>
            <person name="Garcia-del Portillo F."/>
            <person name="Garrido P."/>
            <person name="Gautier L."/>
            <person name="Goebel W."/>
            <person name="Gomez-Lopez N."/>
            <person name="Hain T."/>
            <person name="Hauf J."/>
            <person name="Jackson D."/>
            <person name="Jones L.-M."/>
            <person name="Kaerst U."/>
            <person name="Kreft J."/>
            <person name="Kuhn M."/>
            <person name="Kunst F."/>
            <person name="Kurapkat G."/>
            <person name="Madueno E."/>
            <person name="Maitournam A."/>
            <person name="Mata Vicente J."/>
            <person name="Ng E."/>
            <person name="Nedjari H."/>
            <person name="Nordsiek G."/>
            <person name="Novella S."/>
            <person name="de Pablos B."/>
            <person name="Perez-Diaz J.-C."/>
            <person name="Purcell R."/>
            <person name="Remmel B."/>
            <person name="Rose M."/>
            <person name="Schlueter T."/>
            <person name="Simoes N."/>
            <person name="Tierrez A."/>
            <person name="Vazquez-Boland J.-A."/>
            <person name="Voss H."/>
            <person name="Wehland J."/>
            <person name="Cossart P."/>
        </authorList>
    </citation>
    <scope>NUCLEOTIDE SEQUENCE [LARGE SCALE GENOMIC DNA]</scope>
    <source>
        <strain>ATCC BAA-680 / CLIP 11262</strain>
    </source>
</reference>
<gene>
    <name evidence="1" type="primary">infA</name>
    <name type="ordered locus">lin2759</name>
</gene>
<sequence>MAKEDVIEVEGVVQETLPNAMFNVELENGHKVLATVSGKIRMHYIRILPGDKVTVELSPYDLTRGRITYRFK</sequence>
<name>IF1_LISIN</name>
<accession>P65111</accession>
<accession>Q927M9</accession>
<feature type="chain" id="PRO_0000095813" description="Translation initiation factor IF-1">
    <location>
        <begin position="1"/>
        <end position="72"/>
    </location>
</feature>
<feature type="domain" description="S1-like" evidence="1">
    <location>
        <begin position="1"/>
        <end position="72"/>
    </location>
</feature>
<proteinExistence type="inferred from homology"/>
<protein>
    <recommendedName>
        <fullName evidence="1">Translation initiation factor IF-1</fullName>
    </recommendedName>
</protein>
<organism>
    <name type="scientific">Listeria innocua serovar 6a (strain ATCC BAA-680 / CLIP 11262)</name>
    <dbReference type="NCBI Taxonomy" id="272626"/>
    <lineage>
        <taxon>Bacteria</taxon>
        <taxon>Bacillati</taxon>
        <taxon>Bacillota</taxon>
        <taxon>Bacilli</taxon>
        <taxon>Bacillales</taxon>
        <taxon>Listeriaceae</taxon>
        <taxon>Listeria</taxon>
    </lineage>
</organism>
<evidence type="ECO:0000255" key="1">
    <source>
        <dbReference type="HAMAP-Rule" id="MF_00075"/>
    </source>
</evidence>
<dbReference type="EMBL" id="AL596173">
    <property type="protein sequence ID" value="CAC97985.1"/>
    <property type="molecule type" value="Genomic_DNA"/>
</dbReference>
<dbReference type="PIR" id="AI1776">
    <property type="entry name" value="AI1776"/>
</dbReference>
<dbReference type="RefSeq" id="WP_003720929.1">
    <property type="nucleotide sequence ID" value="NC_003212.1"/>
</dbReference>
<dbReference type="SMR" id="P65111"/>
<dbReference type="STRING" id="272626.gene:17567146"/>
<dbReference type="GeneID" id="93240491"/>
<dbReference type="KEGG" id="lin:infA"/>
<dbReference type="eggNOG" id="COG0361">
    <property type="taxonomic scope" value="Bacteria"/>
</dbReference>
<dbReference type="HOGENOM" id="CLU_151267_1_0_9"/>
<dbReference type="OrthoDB" id="9803250at2"/>
<dbReference type="Proteomes" id="UP000002513">
    <property type="component" value="Chromosome"/>
</dbReference>
<dbReference type="GO" id="GO:0005829">
    <property type="term" value="C:cytosol"/>
    <property type="evidence" value="ECO:0007669"/>
    <property type="project" value="TreeGrafter"/>
</dbReference>
<dbReference type="GO" id="GO:0043022">
    <property type="term" value="F:ribosome binding"/>
    <property type="evidence" value="ECO:0007669"/>
    <property type="project" value="UniProtKB-UniRule"/>
</dbReference>
<dbReference type="GO" id="GO:0019843">
    <property type="term" value="F:rRNA binding"/>
    <property type="evidence" value="ECO:0007669"/>
    <property type="project" value="UniProtKB-UniRule"/>
</dbReference>
<dbReference type="GO" id="GO:0003743">
    <property type="term" value="F:translation initiation factor activity"/>
    <property type="evidence" value="ECO:0007669"/>
    <property type="project" value="UniProtKB-UniRule"/>
</dbReference>
<dbReference type="CDD" id="cd04451">
    <property type="entry name" value="S1_IF1"/>
    <property type="match status" value="1"/>
</dbReference>
<dbReference type="FunFam" id="2.40.50.140:FF:000002">
    <property type="entry name" value="Translation initiation factor IF-1"/>
    <property type="match status" value="1"/>
</dbReference>
<dbReference type="Gene3D" id="2.40.50.140">
    <property type="entry name" value="Nucleic acid-binding proteins"/>
    <property type="match status" value="1"/>
</dbReference>
<dbReference type="HAMAP" id="MF_00075">
    <property type="entry name" value="IF_1"/>
    <property type="match status" value="1"/>
</dbReference>
<dbReference type="InterPro" id="IPR012340">
    <property type="entry name" value="NA-bd_OB-fold"/>
</dbReference>
<dbReference type="InterPro" id="IPR006196">
    <property type="entry name" value="RNA-binding_domain_S1_IF1"/>
</dbReference>
<dbReference type="InterPro" id="IPR003029">
    <property type="entry name" value="S1_domain"/>
</dbReference>
<dbReference type="InterPro" id="IPR004368">
    <property type="entry name" value="TIF_IF1"/>
</dbReference>
<dbReference type="NCBIfam" id="TIGR00008">
    <property type="entry name" value="infA"/>
    <property type="match status" value="1"/>
</dbReference>
<dbReference type="PANTHER" id="PTHR33370">
    <property type="entry name" value="TRANSLATION INITIATION FACTOR IF-1, CHLOROPLASTIC"/>
    <property type="match status" value="1"/>
</dbReference>
<dbReference type="PANTHER" id="PTHR33370:SF1">
    <property type="entry name" value="TRANSLATION INITIATION FACTOR IF-1, CHLOROPLASTIC"/>
    <property type="match status" value="1"/>
</dbReference>
<dbReference type="Pfam" id="PF01176">
    <property type="entry name" value="eIF-1a"/>
    <property type="match status" value="1"/>
</dbReference>
<dbReference type="SMART" id="SM00316">
    <property type="entry name" value="S1"/>
    <property type="match status" value="1"/>
</dbReference>
<dbReference type="SUPFAM" id="SSF50249">
    <property type="entry name" value="Nucleic acid-binding proteins"/>
    <property type="match status" value="1"/>
</dbReference>
<dbReference type="PROSITE" id="PS50832">
    <property type="entry name" value="S1_IF1_TYPE"/>
    <property type="match status" value="1"/>
</dbReference>
<comment type="function">
    <text evidence="1">One of the essential components for the initiation of protein synthesis. Stabilizes the binding of IF-2 and IF-3 on the 30S subunit to which N-formylmethionyl-tRNA(fMet) subsequently binds. Helps modulate mRNA selection, yielding the 30S pre-initiation complex (PIC). Upon addition of the 50S ribosomal subunit IF-1, IF-2 and IF-3 are released leaving the mature 70S translation initiation complex.</text>
</comment>
<comment type="subunit">
    <text evidence="1">Component of the 30S ribosomal translation pre-initiation complex which assembles on the 30S ribosome in the order IF-2 and IF-3, IF-1 and N-formylmethionyl-tRNA(fMet); mRNA recruitment can occur at any time during PIC assembly.</text>
</comment>
<comment type="subcellular location">
    <subcellularLocation>
        <location evidence="1">Cytoplasm</location>
    </subcellularLocation>
</comment>
<comment type="similarity">
    <text evidence="1">Belongs to the IF-1 family.</text>
</comment>
<keyword id="KW-0963">Cytoplasm</keyword>
<keyword id="KW-0396">Initiation factor</keyword>
<keyword id="KW-0648">Protein biosynthesis</keyword>
<keyword id="KW-0694">RNA-binding</keyword>
<keyword id="KW-0699">rRNA-binding</keyword>